<organism>
    <name type="scientific">Latimeria chalumnae</name>
    <name type="common">Coelacanth</name>
    <dbReference type="NCBI Taxonomy" id="7897"/>
    <lineage>
        <taxon>Eukaryota</taxon>
        <taxon>Metazoa</taxon>
        <taxon>Chordata</taxon>
        <taxon>Craniata</taxon>
        <taxon>Vertebrata</taxon>
        <taxon>Euteleostomi</taxon>
        <taxon>Coelacanthiformes</taxon>
        <taxon>Coelacanthidae</taxon>
        <taxon>Latimeria</taxon>
    </lineage>
</organism>
<accession>O03167</accession>
<proteinExistence type="inferred from homology"/>
<feature type="chain" id="PRO_0000183349" description="Cytochrome c oxidase subunit 1">
    <location>
        <begin position="1"/>
        <end position="515"/>
    </location>
</feature>
<feature type="topological domain" description="Mitochondrial matrix" evidence="2">
    <location>
        <begin position="1"/>
        <end position="11"/>
    </location>
</feature>
<feature type="transmembrane region" description="Helical; Name=I" evidence="2">
    <location>
        <begin position="12"/>
        <end position="40"/>
    </location>
</feature>
<feature type="topological domain" description="Mitochondrial intermembrane" evidence="2">
    <location>
        <begin position="41"/>
        <end position="50"/>
    </location>
</feature>
<feature type="transmembrane region" description="Helical; Name=II" evidence="2">
    <location>
        <begin position="51"/>
        <end position="86"/>
    </location>
</feature>
<feature type="topological domain" description="Mitochondrial matrix" evidence="2">
    <location>
        <begin position="87"/>
        <end position="94"/>
    </location>
</feature>
<feature type="transmembrane region" description="Helical; Name=III" evidence="2">
    <location>
        <begin position="95"/>
        <end position="117"/>
    </location>
</feature>
<feature type="topological domain" description="Mitochondrial intermembrane" evidence="2">
    <location>
        <begin position="118"/>
        <end position="140"/>
    </location>
</feature>
<feature type="transmembrane region" description="Helical; Name=IV" evidence="2">
    <location>
        <begin position="141"/>
        <end position="170"/>
    </location>
</feature>
<feature type="topological domain" description="Mitochondrial matrix" evidence="2">
    <location>
        <begin position="171"/>
        <end position="182"/>
    </location>
</feature>
<feature type="transmembrane region" description="Helical; Name=V" evidence="2">
    <location>
        <begin position="183"/>
        <end position="212"/>
    </location>
</feature>
<feature type="topological domain" description="Mitochondrial intermembrane" evidence="2">
    <location>
        <begin position="213"/>
        <end position="227"/>
    </location>
</feature>
<feature type="transmembrane region" description="Helical; Name=VI" evidence="2">
    <location>
        <begin position="228"/>
        <end position="261"/>
    </location>
</feature>
<feature type="topological domain" description="Mitochondrial matrix" evidence="2">
    <location>
        <begin position="262"/>
        <end position="269"/>
    </location>
</feature>
<feature type="transmembrane region" description="Helical; Name=VII" evidence="2">
    <location>
        <begin position="270"/>
        <end position="286"/>
    </location>
</feature>
<feature type="topological domain" description="Mitochondrial intermembrane" evidence="2">
    <location>
        <begin position="287"/>
        <end position="298"/>
    </location>
</feature>
<feature type="transmembrane region" description="Helical; Name=VIII" evidence="2">
    <location>
        <begin position="299"/>
        <end position="327"/>
    </location>
</feature>
<feature type="topological domain" description="Mitochondrial matrix" evidence="2">
    <location>
        <begin position="328"/>
        <end position="335"/>
    </location>
</feature>
<feature type="transmembrane region" description="Helical; Name=IX" evidence="2">
    <location>
        <begin position="336"/>
        <end position="357"/>
    </location>
</feature>
<feature type="topological domain" description="Mitochondrial intermembrane" evidence="2">
    <location>
        <begin position="358"/>
        <end position="370"/>
    </location>
</feature>
<feature type="transmembrane region" description="Helical; Name=X" evidence="2">
    <location>
        <begin position="371"/>
        <end position="400"/>
    </location>
</feature>
<feature type="topological domain" description="Mitochondrial matrix" evidence="2">
    <location>
        <begin position="401"/>
        <end position="406"/>
    </location>
</feature>
<feature type="transmembrane region" description="Helical; Name=XI" evidence="2">
    <location>
        <begin position="407"/>
        <end position="433"/>
    </location>
</feature>
<feature type="topological domain" description="Mitochondrial intermembrane" evidence="2">
    <location>
        <begin position="434"/>
        <end position="446"/>
    </location>
</feature>
<feature type="transmembrane region" description="Helical; Name=XII" evidence="2">
    <location>
        <begin position="447"/>
        <end position="478"/>
    </location>
</feature>
<feature type="topological domain" description="Mitochondrial matrix" evidence="2">
    <location>
        <begin position="479"/>
        <end position="515"/>
    </location>
</feature>
<feature type="binding site" evidence="2">
    <location>
        <position position="40"/>
    </location>
    <ligand>
        <name>Na(+)</name>
        <dbReference type="ChEBI" id="CHEBI:29101"/>
    </ligand>
</feature>
<feature type="binding site" evidence="2">
    <location>
        <position position="45"/>
    </location>
    <ligand>
        <name>Na(+)</name>
        <dbReference type="ChEBI" id="CHEBI:29101"/>
    </ligand>
</feature>
<feature type="binding site" description="axial binding residue" evidence="2">
    <location>
        <position position="61"/>
    </location>
    <ligand>
        <name>Fe(II)-heme a</name>
        <dbReference type="ChEBI" id="CHEBI:61715"/>
        <note>low-spin</note>
    </ligand>
    <ligandPart>
        <name>Fe</name>
        <dbReference type="ChEBI" id="CHEBI:18248"/>
    </ligandPart>
</feature>
<feature type="binding site" evidence="2">
    <location>
        <position position="240"/>
    </location>
    <ligand>
        <name>Cu cation</name>
        <dbReference type="ChEBI" id="CHEBI:23378"/>
        <label>B</label>
    </ligand>
</feature>
<feature type="binding site" evidence="2">
    <location>
        <position position="244"/>
    </location>
    <ligand>
        <name>O2</name>
        <dbReference type="ChEBI" id="CHEBI:15379"/>
    </ligand>
</feature>
<feature type="binding site" evidence="2">
    <location>
        <position position="290"/>
    </location>
    <ligand>
        <name>Cu cation</name>
        <dbReference type="ChEBI" id="CHEBI:23378"/>
        <label>B</label>
    </ligand>
</feature>
<feature type="binding site" evidence="2">
    <location>
        <position position="291"/>
    </location>
    <ligand>
        <name>Cu cation</name>
        <dbReference type="ChEBI" id="CHEBI:23378"/>
        <label>B</label>
    </ligand>
</feature>
<feature type="binding site" evidence="2">
    <location>
        <position position="368"/>
    </location>
    <ligand>
        <name>Mg(2+)</name>
        <dbReference type="ChEBI" id="CHEBI:18420"/>
        <note>ligand shared with MT-CO2</note>
    </ligand>
</feature>
<feature type="binding site" evidence="2">
    <location>
        <position position="369"/>
    </location>
    <ligand>
        <name>Mg(2+)</name>
        <dbReference type="ChEBI" id="CHEBI:18420"/>
        <note>ligand shared with MT-CO2</note>
    </ligand>
</feature>
<feature type="binding site" description="axial binding residue" evidence="2">
    <location>
        <position position="376"/>
    </location>
    <ligand>
        <name>heme a3</name>
        <dbReference type="ChEBI" id="CHEBI:83282"/>
        <note>high-spin</note>
    </ligand>
    <ligandPart>
        <name>Fe</name>
        <dbReference type="ChEBI" id="CHEBI:18248"/>
    </ligandPart>
</feature>
<feature type="binding site" description="axial binding residue" evidence="2">
    <location>
        <position position="378"/>
    </location>
    <ligand>
        <name>Fe(II)-heme a</name>
        <dbReference type="ChEBI" id="CHEBI:61715"/>
        <note>low-spin</note>
    </ligand>
    <ligandPart>
        <name>Fe</name>
        <dbReference type="ChEBI" id="CHEBI:18248"/>
    </ligandPart>
</feature>
<feature type="binding site" evidence="2">
    <location>
        <position position="441"/>
    </location>
    <ligand>
        <name>Na(+)</name>
        <dbReference type="ChEBI" id="CHEBI:29101"/>
    </ligand>
</feature>
<feature type="cross-link" description="1'-histidyl-3'-tyrosine (His-Tyr)" evidence="2">
    <location>
        <begin position="240"/>
        <end position="244"/>
    </location>
</feature>
<keyword id="KW-0106">Calcium</keyword>
<keyword id="KW-0186">Copper</keyword>
<keyword id="KW-0249">Electron transport</keyword>
<keyword id="KW-0349">Heme</keyword>
<keyword id="KW-0408">Iron</keyword>
<keyword id="KW-0460">Magnesium</keyword>
<keyword id="KW-0472">Membrane</keyword>
<keyword id="KW-0479">Metal-binding</keyword>
<keyword id="KW-0496">Mitochondrion</keyword>
<keyword id="KW-0999">Mitochondrion inner membrane</keyword>
<keyword id="KW-1185">Reference proteome</keyword>
<keyword id="KW-0679">Respiratory chain</keyword>
<keyword id="KW-0915">Sodium</keyword>
<keyword id="KW-1278">Translocase</keyword>
<keyword id="KW-0812">Transmembrane</keyword>
<keyword id="KW-1133">Transmembrane helix</keyword>
<keyword id="KW-0813">Transport</keyword>
<protein>
    <recommendedName>
        <fullName>Cytochrome c oxidase subunit 1</fullName>
        <ecNumber>7.1.1.9</ecNumber>
    </recommendedName>
    <alternativeName>
        <fullName>Cytochrome c oxidase polypeptide I</fullName>
    </alternativeName>
</protein>
<sequence length="515" mass="56894">MMITRWLFSTNHKDIGTLYMIFGAWAGMVGTALSLLIRAELSQPGALLGDDQIYNVVVTAHAFVMIFFMVMPIMIGGFGNWLIPLMIGAPDMAFPRMNNMSFWLLPPSLLLLLASSGVEAGAGTGWTVYPPLAGNLAHAGASVDLTIFSLHLAGVSSILGAINFITTVINMKPPTMTQYQTPLFIWSVLVTAVLLLLSLPVLAAGITMLLTDRNLNTTFFDPAGGGDPILYQHLFWFFGHPEVYILILPGFGMISHIVAYYSGKKEPFGYMGMVWAMMAIGLLGFIVWAHHMFTVGMDVDTRAYFTSATMIIAIPTGVKVFSWLATLHGGVTKWDTPLLWALGFIFLFTVGGLTGIVLANSSLDIILHDTYYVVAHFHYVLSMGAVFAIMGGLVHWFPLMTGYTLHNTWTKIHFGVMFTGVNLTFFPQHFLGLAGMPRRYSDYPDAYTLWNTVSSIGSLISLIAVIMFMFILWEAFSAKREVLIVEMTTTNVEWLHGCPPPHHTYEEPAFVQAPR</sequence>
<gene>
    <name type="primary">MT-CO1</name>
    <name type="synonym">COI</name>
    <name type="synonym">COXI</name>
    <name type="synonym">MTCO1</name>
</gene>
<comment type="function">
    <text evidence="3">Component of the cytochrome c oxidase, the last enzyme in the mitochondrial electron transport chain which drives oxidative phosphorylation. The respiratory chain contains 3 multisubunit complexes succinate dehydrogenase (complex II, CII), ubiquinol-cytochrome c oxidoreductase (cytochrome b-c1 complex, complex III, CIII) and cytochrome c oxidase (complex IV, CIV), that cooperate to transfer electrons derived from NADH and succinate to molecular oxygen, creating an electrochemical gradient over the inner membrane that drives transmembrane transport and the ATP synthase. Cytochrome c oxidase is the component of the respiratory chain that catalyzes the reduction of oxygen to water. Electrons originating from reduced cytochrome c in the intermembrane space (IMS) are transferred via the dinuclear copper A center (CU(A)) of subunit 2 and heme A of subunit 1 to the active site in subunit 1, a binuclear center (BNC) formed by heme A3 and copper B (CU(B)). The BNC reduces molecular oxygen to 2 water molecules using 4 electrons from cytochrome c in the IMS and 4 protons from the mitochondrial matrix.</text>
</comment>
<comment type="catalytic activity">
    <reaction evidence="3">
        <text>4 Fe(II)-[cytochrome c] + O2 + 8 H(+)(in) = 4 Fe(III)-[cytochrome c] + 2 H2O + 4 H(+)(out)</text>
        <dbReference type="Rhea" id="RHEA:11436"/>
        <dbReference type="Rhea" id="RHEA-COMP:10350"/>
        <dbReference type="Rhea" id="RHEA-COMP:14399"/>
        <dbReference type="ChEBI" id="CHEBI:15377"/>
        <dbReference type="ChEBI" id="CHEBI:15378"/>
        <dbReference type="ChEBI" id="CHEBI:15379"/>
        <dbReference type="ChEBI" id="CHEBI:29033"/>
        <dbReference type="ChEBI" id="CHEBI:29034"/>
        <dbReference type="EC" id="7.1.1.9"/>
    </reaction>
    <physiologicalReaction direction="left-to-right" evidence="3">
        <dbReference type="Rhea" id="RHEA:11437"/>
    </physiologicalReaction>
</comment>
<comment type="cofactor">
    <cofactor evidence="2">
        <name>heme</name>
        <dbReference type="ChEBI" id="CHEBI:30413"/>
    </cofactor>
    <text evidence="2">Binds 2 heme A groups non-covalently per subunit.</text>
</comment>
<comment type="cofactor">
    <cofactor evidence="2">
        <name>Cu cation</name>
        <dbReference type="ChEBI" id="CHEBI:23378"/>
    </cofactor>
    <text evidence="2">Binds a copper B center.</text>
</comment>
<comment type="pathway">
    <text evidence="3">Energy metabolism; oxidative phosphorylation.</text>
</comment>
<comment type="subunit">
    <text evidence="1 2">Component of the cytochrome c oxidase (complex IV, CIV), a multisubunit enzyme composed of 14 subunits. The complex is composed of a catalytic core of 3 subunits MT-CO1, MT-CO2 and MT-CO3, encoded in the mitochondrial DNA, and 11 supernumerary subunits COX4I, COX5A, COX5B, COX6A, COX6B, COX6C, COX7A, COX7B, COX7C, COX8 and NDUFA4, which are encoded in the nuclear genome. The complex exists as a monomer or a dimer and forms supercomplexes (SCs) in the inner mitochondrial membrane with NADH-ubiquinone oxidoreductase (complex I, CI) and ubiquinol-cytochrome c oxidoreductase (cytochrome b-c1 complex, complex III, CIII), resulting in different assemblies (supercomplex SCI(1)III(2)IV(1) and megacomplex MCI(2)III(2)IV(2)) (By similarity). As a newly synthesized protein, rapidly incorporates into a multi-subunit assembly intermediate in the inner membrane, called MITRAC (mitochondrial translation regulation assembly intermediate of cytochrome c oxidase) complex, whose core components are COA3/MITRAC12 and COX14. Within the MITRAC complex, interacts with COA3 and with SMIM20/MITRAC7; the interaction with SMIM20 stabilizes the newly synthesized MT-CO1 and prevents its premature turnover. Interacts with TMEM177 in a COX20-dependent manner (By similarity).</text>
</comment>
<comment type="subcellular location">
    <subcellularLocation>
        <location evidence="2">Mitochondrion inner membrane</location>
        <topology evidence="2">Multi-pass membrane protein</topology>
    </subcellularLocation>
</comment>
<comment type="similarity">
    <text evidence="4">Belongs to the heme-copper respiratory oxidase family.</text>
</comment>
<geneLocation type="mitochondrion"/>
<reference key="1">
    <citation type="journal article" date="1997" name="Genetics">
        <title>The complete DNA sequence of the mitochondrial genome of a 'living fossil,' the coelacanth (Latimeria chalumnae).</title>
        <authorList>
            <person name="Zardoya R."/>
            <person name="Meyer A."/>
        </authorList>
    </citation>
    <scope>NUCLEOTIDE SEQUENCE [LARGE SCALE GENOMIC DNA]</scope>
</reference>
<name>COX1_LATCH</name>
<evidence type="ECO:0000250" key="1">
    <source>
        <dbReference type="UniProtKB" id="P00395"/>
    </source>
</evidence>
<evidence type="ECO:0000250" key="2">
    <source>
        <dbReference type="UniProtKB" id="P00396"/>
    </source>
</evidence>
<evidence type="ECO:0000250" key="3">
    <source>
        <dbReference type="UniProtKB" id="P00401"/>
    </source>
</evidence>
<evidence type="ECO:0000305" key="4"/>
<dbReference type="EC" id="7.1.1.9"/>
<dbReference type="EMBL" id="U82228">
    <property type="protein sequence ID" value="AAC60320.1"/>
    <property type="molecule type" value="Genomic_DNA"/>
</dbReference>
<dbReference type="PIR" id="C58892">
    <property type="entry name" value="C58892"/>
</dbReference>
<dbReference type="RefSeq" id="NP_008331.1">
    <property type="nucleotide sequence ID" value="NC_001804.1"/>
</dbReference>
<dbReference type="SMR" id="O03167"/>
<dbReference type="FunCoup" id="O03167">
    <property type="interactions" value="169"/>
</dbReference>
<dbReference type="STRING" id="7897.ENSLACP00000021807"/>
<dbReference type="Ensembl" id="ENSLACT00000024855.1">
    <property type="protein sequence ID" value="ENSLACP00000021807.2"/>
    <property type="gene ID" value="ENSLACG00000022071.1"/>
</dbReference>
<dbReference type="GeneID" id="808085"/>
<dbReference type="KEGG" id="lcm:808085"/>
<dbReference type="CTD" id="4512"/>
<dbReference type="eggNOG" id="KOG4769">
    <property type="taxonomic scope" value="Eukaryota"/>
</dbReference>
<dbReference type="GeneTree" id="ENSGT00390000001518"/>
<dbReference type="HOGENOM" id="CLU_011899_7_3_1"/>
<dbReference type="InParanoid" id="O03167"/>
<dbReference type="OMA" id="WAMMSIG"/>
<dbReference type="OrthoDB" id="10002679at2759"/>
<dbReference type="UniPathway" id="UPA00705"/>
<dbReference type="Proteomes" id="UP000008672">
    <property type="component" value="Mitochondrion"/>
</dbReference>
<dbReference type="Bgee" id="ENSLACG00000022071">
    <property type="expression patterns" value="Expressed in pectoral fin and 6 other cell types or tissues"/>
</dbReference>
<dbReference type="GO" id="GO:0005743">
    <property type="term" value="C:mitochondrial inner membrane"/>
    <property type="evidence" value="ECO:0007669"/>
    <property type="project" value="UniProtKB-SubCell"/>
</dbReference>
<dbReference type="GO" id="GO:0045277">
    <property type="term" value="C:respiratory chain complex IV"/>
    <property type="evidence" value="ECO:0000250"/>
    <property type="project" value="UniProtKB"/>
</dbReference>
<dbReference type="GO" id="GO:0004129">
    <property type="term" value="F:cytochrome-c oxidase activity"/>
    <property type="evidence" value="ECO:0007669"/>
    <property type="project" value="UniProtKB-EC"/>
</dbReference>
<dbReference type="GO" id="GO:0020037">
    <property type="term" value="F:heme binding"/>
    <property type="evidence" value="ECO:0007669"/>
    <property type="project" value="InterPro"/>
</dbReference>
<dbReference type="GO" id="GO:0046872">
    <property type="term" value="F:metal ion binding"/>
    <property type="evidence" value="ECO:0007669"/>
    <property type="project" value="UniProtKB-KW"/>
</dbReference>
<dbReference type="GO" id="GO:0015990">
    <property type="term" value="P:electron transport coupled proton transport"/>
    <property type="evidence" value="ECO:0007669"/>
    <property type="project" value="TreeGrafter"/>
</dbReference>
<dbReference type="GO" id="GO:0006123">
    <property type="term" value="P:mitochondrial electron transport, cytochrome c to oxygen"/>
    <property type="evidence" value="ECO:0007669"/>
    <property type="project" value="TreeGrafter"/>
</dbReference>
<dbReference type="GO" id="GO:0046686">
    <property type="term" value="P:response to cadmium ion"/>
    <property type="evidence" value="ECO:0007669"/>
    <property type="project" value="Ensembl"/>
</dbReference>
<dbReference type="GO" id="GO:0051597">
    <property type="term" value="P:response to methylmercury"/>
    <property type="evidence" value="ECO:0007669"/>
    <property type="project" value="Ensembl"/>
</dbReference>
<dbReference type="CDD" id="cd01663">
    <property type="entry name" value="Cyt_c_Oxidase_I"/>
    <property type="match status" value="1"/>
</dbReference>
<dbReference type="FunFam" id="1.20.210.10:FF:000001">
    <property type="entry name" value="Cytochrome c oxidase subunit 1"/>
    <property type="match status" value="1"/>
</dbReference>
<dbReference type="Gene3D" id="1.20.210.10">
    <property type="entry name" value="Cytochrome c oxidase-like, subunit I domain"/>
    <property type="match status" value="1"/>
</dbReference>
<dbReference type="InterPro" id="IPR023616">
    <property type="entry name" value="Cyt_c_oxase-like_su1_dom"/>
</dbReference>
<dbReference type="InterPro" id="IPR036927">
    <property type="entry name" value="Cyt_c_oxase-like_su1_sf"/>
</dbReference>
<dbReference type="InterPro" id="IPR000883">
    <property type="entry name" value="Cyt_C_Oxase_1"/>
</dbReference>
<dbReference type="InterPro" id="IPR023615">
    <property type="entry name" value="Cyt_c_Oxase_su1_BS"/>
</dbReference>
<dbReference type="InterPro" id="IPR033944">
    <property type="entry name" value="Cyt_c_oxase_su1_dom"/>
</dbReference>
<dbReference type="PANTHER" id="PTHR10422">
    <property type="entry name" value="CYTOCHROME C OXIDASE SUBUNIT 1"/>
    <property type="match status" value="1"/>
</dbReference>
<dbReference type="PANTHER" id="PTHR10422:SF18">
    <property type="entry name" value="CYTOCHROME C OXIDASE SUBUNIT 1"/>
    <property type="match status" value="1"/>
</dbReference>
<dbReference type="Pfam" id="PF00115">
    <property type="entry name" value="COX1"/>
    <property type="match status" value="1"/>
</dbReference>
<dbReference type="PRINTS" id="PR01165">
    <property type="entry name" value="CYCOXIDASEI"/>
</dbReference>
<dbReference type="SUPFAM" id="SSF81442">
    <property type="entry name" value="Cytochrome c oxidase subunit I-like"/>
    <property type="match status" value="1"/>
</dbReference>
<dbReference type="PROSITE" id="PS50855">
    <property type="entry name" value="COX1"/>
    <property type="match status" value="1"/>
</dbReference>
<dbReference type="PROSITE" id="PS00077">
    <property type="entry name" value="COX1_CUB"/>
    <property type="match status" value="1"/>
</dbReference>